<evidence type="ECO:0000255" key="1">
    <source>
        <dbReference type="PROSITE-ProRule" id="PRU00704"/>
    </source>
</evidence>
<evidence type="ECO:0000305" key="2"/>
<dbReference type="EMBL" id="CP000029">
    <property type="protein sequence ID" value="AAW54310.1"/>
    <property type="molecule type" value="Genomic_DNA"/>
</dbReference>
<dbReference type="RefSeq" id="WP_002456203.1">
    <property type="nucleotide sequence ID" value="NC_002976.3"/>
</dbReference>
<dbReference type="SMR" id="Q5HPI3"/>
<dbReference type="STRING" id="176279.SERP0928"/>
<dbReference type="KEGG" id="ser:SERP0928"/>
<dbReference type="eggNOG" id="COG3711">
    <property type="taxonomic scope" value="Bacteria"/>
</dbReference>
<dbReference type="HOGENOM" id="CLU_078802_0_0_9"/>
<dbReference type="Proteomes" id="UP000000531">
    <property type="component" value="Chromosome"/>
</dbReference>
<dbReference type="GO" id="GO:0003723">
    <property type="term" value="F:RNA binding"/>
    <property type="evidence" value="ECO:0007669"/>
    <property type="project" value="InterPro"/>
</dbReference>
<dbReference type="GO" id="GO:0045893">
    <property type="term" value="P:positive regulation of DNA-templated transcription"/>
    <property type="evidence" value="ECO:0007669"/>
    <property type="project" value="InterPro"/>
</dbReference>
<dbReference type="Gene3D" id="1.20.58.1950">
    <property type="match status" value="1"/>
</dbReference>
<dbReference type="Gene3D" id="1.20.890.100">
    <property type="match status" value="1"/>
</dbReference>
<dbReference type="Gene3D" id="2.30.24.10">
    <property type="entry name" value="CAT RNA-binding domain"/>
    <property type="match status" value="1"/>
</dbReference>
<dbReference type="Gene3D" id="1.10.1790.10">
    <property type="entry name" value="PRD domain"/>
    <property type="match status" value="1"/>
</dbReference>
<dbReference type="InterPro" id="IPR050661">
    <property type="entry name" value="BglG_antiterminators"/>
</dbReference>
<dbReference type="InterPro" id="IPR004341">
    <property type="entry name" value="CAT_RNA-bd_dom"/>
</dbReference>
<dbReference type="InterPro" id="IPR036650">
    <property type="entry name" value="CAT_RNA-bd_dom_sf"/>
</dbReference>
<dbReference type="InterPro" id="IPR011608">
    <property type="entry name" value="PRD"/>
</dbReference>
<dbReference type="InterPro" id="IPR036634">
    <property type="entry name" value="PRD_sf"/>
</dbReference>
<dbReference type="InterPro" id="IPR001550">
    <property type="entry name" value="Transcrpt_antitermin_CS"/>
</dbReference>
<dbReference type="NCBIfam" id="NF047357">
    <property type="entry name" value="antiterm_GlcT"/>
    <property type="match status" value="1"/>
</dbReference>
<dbReference type="PANTHER" id="PTHR30185">
    <property type="entry name" value="CRYPTIC BETA-GLUCOSIDE BGL OPERON ANTITERMINATOR"/>
    <property type="match status" value="1"/>
</dbReference>
<dbReference type="PANTHER" id="PTHR30185:SF16">
    <property type="entry name" value="PROTEIN GLCT"/>
    <property type="match status" value="1"/>
</dbReference>
<dbReference type="Pfam" id="PF03123">
    <property type="entry name" value="CAT_RBD"/>
    <property type="match status" value="1"/>
</dbReference>
<dbReference type="Pfam" id="PF00874">
    <property type="entry name" value="PRD"/>
    <property type="match status" value="2"/>
</dbReference>
<dbReference type="SMART" id="SM01061">
    <property type="entry name" value="CAT_RBD"/>
    <property type="match status" value="1"/>
</dbReference>
<dbReference type="SUPFAM" id="SSF63520">
    <property type="entry name" value="PTS-regulatory domain, PRD"/>
    <property type="match status" value="2"/>
</dbReference>
<dbReference type="SUPFAM" id="SSF50151">
    <property type="entry name" value="SacY-like RNA-binding domain"/>
    <property type="match status" value="1"/>
</dbReference>
<dbReference type="PROSITE" id="PS00654">
    <property type="entry name" value="PRD_1"/>
    <property type="match status" value="1"/>
</dbReference>
<dbReference type="PROSITE" id="PS51372">
    <property type="entry name" value="PRD_2"/>
    <property type="match status" value="2"/>
</dbReference>
<reference key="1">
    <citation type="journal article" date="2005" name="J. Bacteriol.">
        <title>Insights on evolution of virulence and resistance from the complete genome analysis of an early methicillin-resistant Staphylococcus aureus strain and a biofilm-producing methicillin-resistant Staphylococcus epidermidis strain.</title>
        <authorList>
            <person name="Gill S.R."/>
            <person name="Fouts D.E."/>
            <person name="Archer G.L."/>
            <person name="Mongodin E.F."/>
            <person name="DeBoy R.T."/>
            <person name="Ravel J."/>
            <person name="Paulsen I.T."/>
            <person name="Kolonay J.F."/>
            <person name="Brinkac L.M."/>
            <person name="Beanan M.J."/>
            <person name="Dodson R.J."/>
            <person name="Daugherty S.C."/>
            <person name="Madupu R."/>
            <person name="Angiuoli S.V."/>
            <person name="Durkin A.S."/>
            <person name="Haft D.H."/>
            <person name="Vamathevan J.J."/>
            <person name="Khouri H."/>
            <person name="Utterback T.R."/>
            <person name="Lee C."/>
            <person name="Dimitrov G."/>
            <person name="Jiang L."/>
            <person name="Qin H."/>
            <person name="Weidman J."/>
            <person name="Tran K."/>
            <person name="Kang K.H."/>
            <person name="Hance I.R."/>
            <person name="Nelson K.E."/>
            <person name="Fraser C.M."/>
        </authorList>
    </citation>
    <scope>NUCLEOTIDE SEQUENCE [LARGE SCALE GENOMIC DNA]</scope>
    <source>
        <strain>ATCC 35984 / DSM 28319 / BCRC 17069 / CCUG 31568 / BM 3577 / RP62A</strain>
    </source>
</reference>
<keyword id="KW-1185">Reference proteome</keyword>
<keyword id="KW-0677">Repeat</keyword>
<proteinExistence type="inferred from homology"/>
<name>GLCT_STAEQ</name>
<organism>
    <name type="scientific">Staphylococcus epidermidis (strain ATCC 35984 / DSM 28319 / BCRC 17069 / CCUG 31568 / BM 3577 / RP62A)</name>
    <dbReference type="NCBI Taxonomy" id="176279"/>
    <lineage>
        <taxon>Bacteria</taxon>
        <taxon>Bacillati</taxon>
        <taxon>Bacillota</taxon>
        <taxon>Bacilli</taxon>
        <taxon>Bacillales</taxon>
        <taxon>Staphylococcaceae</taxon>
        <taxon>Staphylococcus</taxon>
    </lineage>
</organism>
<accession>Q5HPI3</accession>
<protein>
    <recommendedName>
        <fullName>Protein GlcT</fullName>
    </recommendedName>
</protein>
<sequence>MSKYVITKTLNNNVIICTKNHQEVVLIGKGIGFNKKVGMTVQENASIEKIYKLEQQEQQEHYKTLLELGEDHVVQAVIESVNIINESGLITDDKNLVVALTDHIIYAYKRLKQHQMITNPFVIETKHLYSNAYNVARKVIDKLNKTLDVHFPEDEIGFIALHIASNSEKLSIHDISVINKLINKSITIIETDLQHSIDKQTIQYQRFIRHIQFLIYRLTKGEYLEAQENFISMIKTMYPRSFNTAYKILKMIQREFSVYVYEAEIVYLTLHINHFEVQISSE</sequence>
<comment type="similarity">
    <text evidence="2">Belongs to the transcriptional antiterminator BglG family. GlcT subfamily.</text>
</comment>
<feature type="chain" id="PRO_0000352615" description="Protein GlcT">
    <location>
        <begin position="1"/>
        <end position="282"/>
    </location>
</feature>
<feature type="domain" description="PRD 1" evidence="1">
    <location>
        <begin position="68"/>
        <end position="173"/>
    </location>
</feature>
<feature type="domain" description="PRD 2" evidence="1">
    <location>
        <begin position="174"/>
        <end position="282"/>
    </location>
</feature>
<gene>
    <name type="primary">glcT</name>
    <name type="ordered locus">SERP0928</name>
</gene>